<name>MIAB_SORC5</name>
<organism>
    <name type="scientific">Sorangium cellulosum (strain So ce56)</name>
    <name type="common">Polyangium cellulosum (strain So ce56)</name>
    <dbReference type="NCBI Taxonomy" id="448385"/>
    <lineage>
        <taxon>Bacteria</taxon>
        <taxon>Pseudomonadati</taxon>
        <taxon>Myxococcota</taxon>
        <taxon>Polyangia</taxon>
        <taxon>Polyangiales</taxon>
        <taxon>Polyangiaceae</taxon>
        <taxon>Sorangium</taxon>
    </lineage>
</organism>
<gene>
    <name evidence="1" type="primary">miaB</name>
    <name type="ordered locus">sce5270</name>
</gene>
<comment type="function">
    <text evidence="1">Catalyzes the methylthiolation of N6-(dimethylallyl)adenosine (i(6)A), leading to the formation of 2-methylthio-N6-(dimethylallyl)adenosine (ms(2)i(6)A) at position 37 in tRNAs that read codons beginning with uridine.</text>
</comment>
<comment type="catalytic activity">
    <reaction evidence="1">
        <text>N(6)-dimethylallyladenosine(37) in tRNA + (sulfur carrier)-SH + AH2 + 2 S-adenosyl-L-methionine = 2-methylsulfanyl-N(6)-dimethylallyladenosine(37) in tRNA + (sulfur carrier)-H + 5'-deoxyadenosine + L-methionine + A + S-adenosyl-L-homocysteine + 2 H(+)</text>
        <dbReference type="Rhea" id="RHEA:37067"/>
        <dbReference type="Rhea" id="RHEA-COMP:10375"/>
        <dbReference type="Rhea" id="RHEA-COMP:10376"/>
        <dbReference type="Rhea" id="RHEA-COMP:14737"/>
        <dbReference type="Rhea" id="RHEA-COMP:14739"/>
        <dbReference type="ChEBI" id="CHEBI:13193"/>
        <dbReference type="ChEBI" id="CHEBI:15378"/>
        <dbReference type="ChEBI" id="CHEBI:17319"/>
        <dbReference type="ChEBI" id="CHEBI:17499"/>
        <dbReference type="ChEBI" id="CHEBI:29917"/>
        <dbReference type="ChEBI" id="CHEBI:57844"/>
        <dbReference type="ChEBI" id="CHEBI:57856"/>
        <dbReference type="ChEBI" id="CHEBI:59789"/>
        <dbReference type="ChEBI" id="CHEBI:64428"/>
        <dbReference type="ChEBI" id="CHEBI:74415"/>
        <dbReference type="ChEBI" id="CHEBI:74417"/>
        <dbReference type="EC" id="2.8.4.3"/>
    </reaction>
</comment>
<comment type="cofactor">
    <cofactor evidence="1">
        <name>[4Fe-4S] cluster</name>
        <dbReference type="ChEBI" id="CHEBI:49883"/>
    </cofactor>
    <text evidence="1">Binds 2 [4Fe-4S] clusters. One cluster is coordinated with 3 cysteines and an exchangeable S-adenosyl-L-methionine.</text>
</comment>
<comment type="subunit">
    <text evidence="1">Monomer.</text>
</comment>
<comment type="subcellular location">
    <subcellularLocation>
        <location evidence="1">Cytoplasm</location>
    </subcellularLocation>
</comment>
<comment type="similarity">
    <text evidence="1">Belongs to the methylthiotransferase family. MiaB subfamily.</text>
</comment>
<dbReference type="EC" id="2.8.4.3" evidence="1"/>
<dbReference type="EMBL" id="AM746676">
    <property type="protein sequence ID" value="CAN95433.1"/>
    <property type="molecule type" value="Genomic_DNA"/>
</dbReference>
<dbReference type="RefSeq" id="WP_012237901.1">
    <property type="nucleotide sequence ID" value="NC_010162.1"/>
</dbReference>
<dbReference type="SMR" id="A9FST8"/>
<dbReference type="STRING" id="448385.sce5270"/>
<dbReference type="KEGG" id="scl:sce5270"/>
<dbReference type="eggNOG" id="COG0621">
    <property type="taxonomic scope" value="Bacteria"/>
</dbReference>
<dbReference type="HOGENOM" id="CLU_018697_2_0_7"/>
<dbReference type="OrthoDB" id="9805215at2"/>
<dbReference type="BioCyc" id="SCEL448385:SCE_RS27050-MONOMER"/>
<dbReference type="Proteomes" id="UP000002139">
    <property type="component" value="Chromosome"/>
</dbReference>
<dbReference type="GO" id="GO:0005829">
    <property type="term" value="C:cytosol"/>
    <property type="evidence" value="ECO:0007669"/>
    <property type="project" value="TreeGrafter"/>
</dbReference>
<dbReference type="GO" id="GO:0051539">
    <property type="term" value="F:4 iron, 4 sulfur cluster binding"/>
    <property type="evidence" value="ECO:0007669"/>
    <property type="project" value="UniProtKB-UniRule"/>
</dbReference>
<dbReference type="GO" id="GO:0046872">
    <property type="term" value="F:metal ion binding"/>
    <property type="evidence" value="ECO:0007669"/>
    <property type="project" value="UniProtKB-KW"/>
</dbReference>
<dbReference type="GO" id="GO:0035597">
    <property type="term" value="F:N6-isopentenyladenosine methylthiotransferase activity"/>
    <property type="evidence" value="ECO:0007669"/>
    <property type="project" value="TreeGrafter"/>
</dbReference>
<dbReference type="CDD" id="cd01335">
    <property type="entry name" value="Radical_SAM"/>
    <property type="match status" value="1"/>
</dbReference>
<dbReference type="FunFam" id="3.40.50.12160:FF:000003">
    <property type="entry name" value="CDK5 regulatory subunit-associated protein 1"/>
    <property type="match status" value="1"/>
</dbReference>
<dbReference type="FunFam" id="3.80.30.20:FF:000001">
    <property type="entry name" value="tRNA-2-methylthio-N(6)-dimethylallyladenosine synthase 2"/>
    <property type="match status" value="1"/>
</dbReference>
<dbReference type="Gene3D" id="3.40.50.12160">
    <property type="entry name" value="Methylthiotransferase, N-terminal domain"/>
    <property type="match status" value="1"/>
</dbReference>
<dbReference type="Gene3D" id="3.80.30.20">
    <property type="entry name" value="tm_1862 like domain"/>
    <property type="match status" value="1"/>
</dbReference>
<dbReference type="HAMAP" id="MF_01864">
    <property type="entry name" value="tRNA_metthiotr_MiaB"/>
    <property type="match status" value="1"/>
</dbReference>
<dbReference type="InterPro" id="IPR006638">
    <property type="entry name" value="Elp3/MiaA/NifB-like_rSAM"/>
</dbReference>
<dbReference type="InterPro" id="IPR005839">
    <property type="entry name" value="Methylthiotransferase"/>
</dbReference>
<dbReference type="InterPro" id="IPR020612">
    <property type="entry name" value="Methylthiotransferase_CS"/>
</dbReference>
<dbReference type="InterPro" id="IPR013848">
    <property type="entry name" value="Methylthiotransferase_N"/>
</dbReference>
<dbReference type="InterPro" id="IPR038135">
    <property type="entry name" value="Methylthiotransferase_N_sf"/>
</dbReference>
<dbReference type="InterPro" id="IPR006463">
    <property type="entry name" value="MiaB_methiolase"/>
</dbReference>
<dbReference type="InterPro" id="IPR007197">
    <property type="entry name" value="rSAM"/>
</dbReference>
<dbReference type="InterPro" id="IPR023404">
    <property type="entry name" value="rSAM_horseshoe"/>
</dbReference>
<dbReference type="InterPro" id="IPR002792">
    <property type="entry name" value="TRAM_dom"/>
</dbReference>
<dbReference type="NCBIfam" id="TIGR01574">
    <property type="entry name" value="miaB-methiolase"/>
    <property type="match status" value="1"/>
</dbReference>
<dbReference type="NCBIfam" id="TIGR00089">
    <property type="entry name" value="MiaB/RimO family radical SAM methylthiotransferase"/>
    <property type="match status" value="1"/>
</dbReference>
<dbReference type="PANTHER" id="PTHR43020">
    <property type="entry name" value="CDK5 REGULATORY SUBUNIT-ASSOCIATED PROTEIN 1"/>
    <property type="match status" value="1"/>
</dbReference>
<dbReference type="PANTHER" id="PTHR43020:SF2">
    <property type="entry name" value="MITOCHONDRIAL TRNA METHYLTHIOTRANSFERASE CDK5RAP1"/>
    <property type="match status" value="1"/>
</dbReference>
<dbReference type="Pfam" id="PF04055">
    <property type="entry name" value="Radical_SAM"/>
    <property type="match status" value="1"/>
</dbReference>
<dbReference type="Pfam" id="PF01938">
    <property type="entry name" value="TRAM"/>
    <property type="match status" value="1"/>
</dbReference>
<dbReference type="Pfam" id="PF00919">
    <property type="entry name" value="UPF0004"/>
    <property type="match status" value="1"/>
</dbReference>
<dbReference type="SFLD" id="SFLDF00273">
    <property type="entry name" value="(dimethylallyl)adenosine_tRNA"/>
    <property type="match status" value="1"/>
</dbReference>
<dbReference type="SFLD" id="SFLDG01082">
    <property type="entry name" value="B12-binding_domain_containing"/>
    <property type="match status" value="1"/>
</dbReference>
<dbReference type="SFLD" id="SFLDG01061">
    <property type="entry name" value="methylthiotransferase"/>
    <property type="match status" value="1"/>
</dbReference>
<dbReference type="SMART" id="SM00729">
    <property type="entry name" value="Elp3"/>
    <property type="match status" value="1"/>
</dbReference>
<dbReference type="SUPFAM" id="SSF102114">
    <property type="entry name" value="Radical SAM enzymes"/>
    <property type="match status" value="1"/>
</dbReference>
<dbReference type="PROSITE" id="PS51449">
    <property type="entry name" value="MTTASE_N"/>
    <property type="match status" value="1"/>
</dbReference>
<dbReference type="PROSITE" id="PS01278">
    <property type="entry name" value="MTTASE_RADICAL"/>
    <property type="match status" value="1"/>
</dbReference>
<dbReference type="PROSITE" id="PS51918">
    <property type="entry name" value="RADICAL_SAM"/>
    <property type="match status" value="1"/>
</dbReference>
<dbReference type="PROSITE" id="PS50926">
    <property type="entry name" value="TRAM"/>
    <property type="match status" value="1"/>
</dbReference>
<sequence>MPRYSITTFGCQMNVHDSERMHDVLRCAGYTEAGSADEADVLVLNTCSVREKAEQKLRSEVGRLARWKRERADRVLVVAGCVAQQEGERLLKQMRAIDVVVGPDNIPELPGLLGDLAIGGLPIARTVFDLDAPRFLVASPPSPSSSSSPRAAPTAFVTVMKGCDERCSFCIVPHTRGPERYRPSDEIVAEIAALVAAGTREVTLLGQTVNSYRDPLGALPRAPGASADDPDESEFAALLRRVAADVPGLARLRYTSPHPRHLTPSLVLAHAELPVLPRHVHMPVQSGSDRVLRRMIRRYTRAEYVARTRALVEAVPGLTLSTDIIVGFPGETEDDFAATLSLVREVGFKGLFGFKYSRRPHTPALKLPDDVPEGVKGERLARLFEESEALLAAHLSALVGTTQEVLVEGRDKERGHGGAGGALWSGRTGRHEIAHIDGAGELDLLGEVVEVSIARANKHSLQAELTEAARAAARPRQRGGLEPRPARRSLPVVAAEGG</sequence>
<evidence type="ECO:0000255" key="1">
    <source>
        <dbReference type="HAMAP-Rule" id="MF_01864"/>
    </source>
</evidence>
<evidence type="ECO:0000255" key="2">
    <source>
        <dbReference type="PROSITE-ProRule" id="PRU01266"/>
    </source>
</evidence>
<evidence type="ECO:0000256" key="3">
    <source>
        <dbReference type="SAM" id="MobiDB-lite"/>
    </source>
</evidence>
<proteinExistence type="inferred from homology"/>
<reference key="1">
    <citation type="journal article" date="2007" name="Nat. Biotechnol.">
        <title>Complete genome sequence of the myxobacterium Sorangium cellulosum.</title>
        <authorList>
            <person name="Schneiker S."/>
            <person name="Perlova O."/>
            <person name="Kaiser O."/>
            <person name="Gerth K."/>
            <person name="Alici A."/>
            <person name="Altmeyer M.O."/>
            <person name="Bartels D."/>
            <person name="Bekel T."/>
            <person name="Beyer S."/>
            <person name="Bode E."/>
            <person name="Bode H.B."/>
            <person name="Bolten C.J."/>
            <person name="Choudhuri J.V."/>
            <person name="Doss S."/>
            <person name="Elnakady Y.A."/>
            <person name="Frank B."/>
            <person name="Gaigalat L."/>
            <person name="Goesmann A."/>
            <person name="Groeger C."/>
            <person name="Gross F."/>
            <person name="Jelsbak L."/>
            <person name="Jelsbak L."/>
            <person name="Kalinowski J."/>
            <person name="Kegler C."/>
            <person name="Knauber T."/>
            <person name="Konietzny S."/>
            <person name="Kopp M."/>
            <person name="Krause L."/>
            <person name="Krug D."/>
            <person name="Linke B."/>
            <person name="Mahmud T."/>
            <person name="Martinez-Arias R."/>
            <person name="McHardy A.C."/>
            <person name="Merai M."/>
            <person name="Meyer F."/>
            <person name="Mormann S."/>
            <person name="Munoz-Dorado J."/>
            <person name="Perez J."/>
            <person name="Pradella S."/>
            <person name="Rachid S."/>
            <person name="Raddatz G."/>
            <person name="Rosenau F."/>
            <person name="Rueckert C."/>
            <person name="Sasse F."/>
            <person name="Scharfe M."/>
            <person name="Schuster S.C."/>
            <person name="Suen G."/>
            <person name="Treuner-Lange A."/>
            <person name="Velicer G.J."/>
            <person name="Vorholter F.-J."/>
            <person name="Weissman K.J."/>
            <person name="Welch R.D."/>
            <person name="Wenzel S.C."/>
            <person name="Whitworth D.E."/>
            <person name="Wilhelm S."/>
            <person name="Wittmann C."/>
            <person name="Bloecker H."/>
            <person name="Puehler A."/>
            <person name="Mueller R."/>
        </authorList>
    </citation>
    <scope>NUCLEOTIDE SEQUENCE [LARGE SCALE GENOMIC DNA]</scope>
    <source>
        <strain>So ce56</strain>
    </source>
</reference>
<protein>
    <recommendedName>
        <fullName evidence="1">tRNA-2-methylthio-N(6)-dimethylallyladenosine synthase</fullName>
        <ecNumber evidence="1">2.8.4.3</ecNumber>
    </recommendedName>
    <alternativeName>
        <fullName evidence="1">(Dimethylallyl)adenosine tRNA methylthiotransferase MiaB</fullName>
    </alternativeName>
    <alternativeName>
        <fullName evidence="1">tRNA-i(6)A37 methylthiotransferase</fullName>
    </alternativeName>
</protein>
<keyword id="KW-0004">4Fe-4S</keyword>
<keyword id="KW-0963">Cytoplasm</keyword>
<keyword id="KW-0408">Iron</keyword>
<keyword id="KW-0411">Iron-sulfur</keyword>
<keyword id="KW-0479">Metal-binding</keyword>
<keyword id="KW-1185">Reference proteome</keyword>
<keyword id="KW-0949">S-adenosyl-L-methionine</keyword>
<keyword id="KW-0808">Transferase</keyword>
<keyword id="KW-0819">tRNA processing</keyword>
<feature type="chain" id="PRO_0000374561" description="tRNA-2-methylthio-N(6)-dimethylallyladenosine synthase">
    <location>
        <begin position="1"/>
        <end position="498"/>
    </location>
</feature>
<feature type="domain" description="MTTase N-terminal" evidence="1">
    <location>
        <begin position="2"/>
        <end position="118"/>
    </location>
</feature>
<feature type="domain" description="Radical SAM core" evidence="2">
    <location>
        <begin position="149"/>
        <end position="393"/>
    </location>
</feature>
<feature type="domain" description="TRAM" evidence="1">
    <location>
        <begin position="396"/>
        <end position="467"/>
    </location>
</feature>
<feature type="region of interest" description="Disordered" evidence="3">
    <location>
        <begin position="469"/>
        <end position="498"/>
    </location>
</feature>
<feature type="binding site" evidence="1">
    <location>
        <position position="11"/>
    </location>
    <ligand>
        <name>[4Fe-4S] cluster</name>
        <dbReference type="ChEBI" id="CHEBI:49883"/>
        <label>1</label>
    </ligand>
</feature>
<feature type="binding site" evidence="1">
    <location>
        <position position="47"/>
    </location>
    <ligand>
        <name>[4Fe-4S] cluster</name>
        <dbReference type="ChEBI" id="CHEBI:49883"/>
        <label>1</label>
    </ligand>
</feature>
<feature type="binding site" evidence="1">
    <location>
        <position position="81"/>
    </location>
    <ligand>
        <name>[4Fe-4S] cluster</name>
        <dbReference type="ChEBI" id="CHEBI:49883"/>
        <label>1</label>
    </ligand>
</feature>
<feature type="binding site" evidence="1">
    <location>
        <position position="163"/>
    </location>
    <ligand>
        <name>[4Fe-4S] cluster</name>
        <dbReference type="ChEBI" id="CHEBI:49883"/>
        <label>2</label>
        <note>4Fe-4S-S-AdoMet</note>
    </ligand>
</feature>
<feature type="binding site" evidence="1">
    <location>
        <position position="167"/>
    </location>
    <ligand>
        <name>[4Fe-4S] cluster</name>
        <dbReference type="ChEBI" id="CHEBI:49883"/>
        <label>2</label>
        <note>4Fe-4S-S-AdoMet</note>
    </ligand>
</feature>
<feature type="binding site" evidence="1">
    <location>
        <position position="170"/>
    </location>
    <ligand>
        <name>[4Fe-4S] cluster</name>
        <dbReference type="ChEBI" id="CHEBI:49883"/>
        <label>2</label>
        <note>4Fe-4S-S-AdoMet</note>
    </ligand>
</feature>
<accession>A9FST8</accession>